<reference key="1">
    <citation type="journal article" date="2009" name="PLoS Genet.">
        <title>Organised genome dynamics in the Escherichia coli species results in highly diverse adaptive paths.</title>
        <authorList>
            <person name="Touchon M."/>
            <person name="Hoede C."/>
            <person name="Tenaillon O."/>
            <person name="Barbe V."/>
            <person name="Baeriswyl S."/>
            <person name="Bidet P."/>
            <person name="Bingen E."/>
            <person name="Bonacorsi S."/>
            <person name="Bouchier C."/>
            <person name="Bouvet O."/>
            <person name="Calteau A."/>
            <person name="Chiapello H."/>
            <person name="Clermont O."/>
            <person name="Cruveiller S."/>
            <person name="Danchin A."/>
            <person name="Diard M."/>
            <person name="Dossat C."/>
            <person name="Karoui M.E."/>
            <person name="Frapy E."/>
            <person name="Garry L."/>
            <person name="Ghigo J.M."/>
            <person name="Gilles A.M."/>
            <person name="Johnson J."/>
            <person name="Le Bouguenec C."/>
            <person name="Lescat M."/>
            <person name="Mangenot S."/>
            <person name="Martinez-Jehanne V."/>
            <person name="Matic I."/>
            <person name="Nassif X."/>
            <person name="Oztas S."/>
            <person name="Petit M.A."/>
            <person name="Pichon C."/>
            <person name="Rouy Z."/>
            <person name="Ruf C.S."/>
            <person name="Schneider D."/>
            <person name="Tourret J."/>
            <person name="Vacherie B."/>
            <person name="Vallenet D."/>
            <person name="Medigue C."/>
            <person name="Rocha E.P.C."/>
            <person name="Denamur E."/>
        </authorList>
    </citation>
    <scope>NUCLEOTIDE SEQUENCE [LARGE SCALE GENOMIC DNA]</scope>
    <source>
        <strain>UMN026 / ExPEC</strain>
    </source>
</reference>
<name>LLDD_ECOLU</name>
<comment type="function">
    <text evidence="1">Catalyzes the conversion of L-lactate to pyruvate. Is coupled to the respiratory chain.</text>
</comment>
<comment type="catalytic activity">
    <reaction evidence="1">
        <text>(S)-lactate + A = pyruvate + AH2</text>
        <dbReference type="Rhea" id="RHEA:45816"/>
        <dbReference type="ChEBI" id="CHEBI:13193"/>
        <dbReference type="ChEBI" id="CHEBI:15361"/>
        <dbReference type="ChEBI" id="CHEBI:16651"/>
        <dbReference type="ChEBI" id="CHEBI:17499"/>
    </reaction>
</comment>
<comment type="cofactor">
    <cofactor evidence="1">
        <name>FMN</name>
        <dbReference type="ChEBI" id="CHEBI:58210"/>
    </cofactor>
</comment>
<comment type="subcellular location">
    <subcellularLocation>
        <location evidence="1">Cell inner membrane</location>
        <topology evidence="1">Peripheral membrane protein</topology>
    </subcellularLocation>
</comment>
<comment type="similarity">
    <text evidence="1">Belongs to the FMN-dependent alpha-hydroxy acid dehydrogenase family.</text>
</comment>
<protein>
    <recommendedName>
        <fullName evidence="1">L-lactate dehydrogenase</fullName>
        <ecNumber evidence="1">1.1.-.-</ecNumber>
    </recommendedName>
</protein>
<sequence length="396" mass="42728">MIISAASDYRAAAQRILPPFLFHYMDGGAYSEYTLRRNVEDLSEVALRQRILKNMSDLSLETTLFNEKLSMPVALAPVGLCGMYARRGEVQAAKAADAHGIPFTLSTVSVCPIEEVAPAIKRPMWFQLYVLRDRGFMRNALERAKAAGCSTLVFTVDMPTPGARYRDAHSGMSGPNAAMRRYLQAVTHPQWAWDVGLNGRPHDLGNISAYLGKPTGLEDYIGWLGNNFDPSISWKDLEWIRDFWDGPMVIKGILDPEDARDAVRFGADGIVVSNHGGRQLDGVLSSARALPAIADAVKGDIAILADSGIRNGLDVVRMIALGADTVLLGRAFLYALATAGQAGVANLLNLIEKEMKVAMTLTGAKSISEITQDSLVQGLGKELPAALAPMAKGNAA</sequence>
<accession>B7NER0</accession>
<organism>
    <name type="scientific">Escherichia coli O17:K52:H18 (strain UMN026 / ExPEC)</name>
    <dbReference type="NCBI Taxonomy" id="585056"/>
    <lineage>
        <taxon>Bacteria</taxon>
        <taxon>Pseudomonadati</taxon>
        <taxon>Pseudomonadota</taxon>
        <taxon>Gammaproteobacteria</taxon>
        <taxon>Enterobacterales</taxon>
        <taxon>Enterobacteriaceae</taxon>
        <taxon>Escherichia</taxon>
    </lineage>
</organism>
<feature type="chain" id="PRO_0000383426" description="L-lactate dehydrogenase">
    <location>
        <begin position="1"/>
        <end position="396"/>
    </location>
</feature>
<feature type="domain" description="FMN hydroxy acid dehydrogenase" evidence="1">
    <location>
        <begin position="1"/>
        <end position="380"/>
    </location>
</feature>
<feature type="active site" description="Proton acceptor" evidence="1">
    <location>
        <position position="275"/>
    </location>
</feature>
<feature type="binding site" evidence="1">
    <location>
        <position position="24"/>
    </location>
    <ligand>
        <name>substrate</name>
    </ligand>
</feature>
<feature type="binding site" evidence="1">
    <location>
        <position position="106"/>
    </location>
    <ligand>
        <name>FMN</name>
        <dbReference type="ChEBI" id="CHEBI:58210"/>
    </ligand>
</feature>
<feature type="binding site" evidence="1">
    <location>
        <position position="127"/>
    </location>
    <ligand>
        <name>FMN</name>
        <dbReference type="ChEBI" id="CHEBI:58210"/>
    </ligand>
</feature>
<feature type="binding site" evidence="1">
    <location>
        <position position="129"/>
    </location>
    <ligand>
        <name>substrate</name>
    </ligand>
</feature>
<feature type="binding site" evidence="1">
    <location>
        <position position="155"/>
    </location>
    <ligand>
        <name>FMN</name>
        <dbReference type="ChEBI" id="CHEBI:58210"/>
    </ligand>
</feature>
<feature type="binding site" evidence="1">
    <location>
        <position position="164"/>
    </location>
    <ligand>
        <name>substrate</name>
    </ligand>
</feature>
<feature type="binding site" evidence="1">
    <location>
        <position position="251"/>
    </location>
    <ligand>
        <name>FMN</name>
        <dbReference type="ChEBI" id="CHEBI:58210"/>
    </ligand>
</feature>
<feature type="binding site" evidence="1">
    <location>
        <position position="278"/>
    </location>
    <ligand>
        <name>substrate</name>
    </ligand>
</feature>
<feature type="binding site" evidence="1">
    <location>
        <begin position="306"/>
        <end position="330"/>
    </location>
    <ligand>
        <name>FMN</name>
        <dbReference type="ChEBI" id="CHEBI:58210"/>
    </ligand>
</feature>
<keyword id="KW-0997">Cell inner membrane</keyword>
<keyword id="KW-1003">Cell membrane</keyword>
<keyword id="KW-0285">Flavoprotein</keyword>
<keyword id="KW-0288">FMN</keyword>
<keyword id="KW-0472">Membrane</keyword>
<keyword id="KW-0560">Oxidoreductase</keyword>
<dbReference type="EC" id="1.1.-.-" evidence="1"/>
<dbReference type="EMBL" id="CU928163">
    <property type="protein sequence ID" value="CAR15261.1"/>
    <property type="molecule type" value="Genomic_DNA"/>
</dbReference>
<dbReference type="RefSeq" id="WP_000586962.1">
    <property type="nucleotide sequence ID" value="NC_011751.1"/>
</dbReference>
<dbReference type="RefSeq" id="YP_002414759.1">
    <property type="nucleotide sequence ID" value="NC_011751.1"/>
</dbReference>
<dbReference type="SMR" id="B7NER0"/>
<dbReference type="STRING" id="585056.ECUMN_4120"/>
<dbReference type="KEGG" id="eum:ECUMN_4120"/>
<dbReference type="PATRIC" id="fig|585056.7.peg.4294"/>
<dbReference type="HOGENOM" id="CLU_020639_0_0_6"/>
<dbReference type="Proteomes" id="UP000007097">
    <property type="component" value="Chromosome"/>
</dbReference>
<dbReference type="GO" id="GO:0005886">
    <property type="term" value="C:plasma membrane"/>
    <property type="evidence" value="ECO:0007669"/>
    <property type="project" value="UniProtKB-SubCell"/>
</dbReference>
<dbReference type="GO" id="GO:0010181">
    <property type="term" value="F:FMN binding"/>
    <property type="evidence" value="ECO:0007669"/>
    <property type="project" value="InterPro"/>
</dbReference>
<dbReference type="GO" id="GO:0004459">
    <property type="term" value="F:L-lactate dehydrogenase activity"/>
    <property type="evidence" value="ECO:0007669"/>
    <property type="project" value="UniProtKB-UniRule"/>
</dbReference>
<dbReference type="GO" id="GO:0009060">
    <property type="term" value="P:aerobic respiration"/>
    <property type="evidence" value="ECO:0007669"/>
    <property type="project" value="TreeGrafter"/>
</dbReference>
<dbReference type="GO" id="GO:0006089">
    <property type="term" value="P:lactate metabolic process"/>
    <property type="evidence" value="ECO:0007669"/>
    <property type="project" value="UniProtKB-UniRule"/>
</dbReference>
<dbReference type="CDD" id="cd02809">
    <property type="entry name" value="alpha_hydroxyacid_oxid_FMN"/>
    <property type="match status" value="1"/>
</dbReference>
<dbReference type="FunFam" id="3.20.20.70:FF:000029">
    <property type="entry name" value="L-lactate dehydrogenase"/>
    <property type="match status" value="1"/>
</dbReference>
<dbReference type="Gene3D" id="3.20.20.70">
    <property type="entry name" value="Aldolase class I"/>
    <property type="match status" value="1"/>
</dbReference>
<dbReference type="HAMAP" id="MF_01559">
    <property type="entry name" value="L_lact_dehydr"/>
    <property type="match status" value="1"/>
</dbReference>
<dbReference type="InterPro" id="IPR013785">
    <property type="entry name" value="Aldolase_TIM"/>
</dbReference>
<dbReference type="InterPro" id="IPR012133">
    <property type="entry name" value="Alpha-hydoxy_acid_DH_FMN"/>
</dbReference>
<dbReference type="InterPro" id="IPR000262">
    <property type="entry name" value="FMN-dep_DH"/>
</dbReference>
<dbReference type="InterPro" id="IPR037396">
    <property type="entry name" value="FMN_HAD"/>
</dbReference>
<dbReference type="InterPro" id="IPR008259">
    <property type="entry name" value="FMN_hydac_DH_AS"/>
</dbReference>
<dbReference type="InterPro" id="IPR020920">
    <property type="entry name" value="LldD"/>
</dbReference>
<dbReference type="NCBIfam" id="NF033901">
    <property type="entry name" value="L_lactate_LldD"/>
    <property type="match status" value="1"/>
</dbReference>
<dbReference type="NCBIfam" id="NF008398">
    <property type="entry name" value="PRK11197.1"/>
    <property type="match status" value="1"/>
</dbReference>
<dbReference type="PANTHER" id="PTHR10578:SF85">
    <property type="entry name" value="L-LACTATE DEHYDROGENASE"/>
    <property type="match status" value="1"/>
</dbReference>
<dbReference type="PANTHER" id="PTHR10578">
    <property type="entry name" value="S -2-HYDROXY-ACID OXIDASE-RELATED"/>
    <property type="match status" value="1"/>
</dbReference>
<dbReference type="Pfam" id="PF01070">
    <property type="entry name" value="FMN_dh"/>
    <property type="match status" value="1"/>
</dbReference>
<dbReference type="PIRSF" id="PIRSF000138">
    <property type="entry name" value="Al-hdrx_acd_dh"/>
    <property type="match status" value="1"/>
</dbReference>
<dbReference type="SUPFAM" id="SSF51395">
    <property type="entry name" value="FMN-linked oxidoreductases"/>
    <property type="match status" value="1"/>
</dbReference>
<dbReference type="PROSITE" id="PS00557">
    <property type="entry name" value="FMN_HYDROXY_ACID_DH_1"/>
    <property type="match status" value="1"/>
</dbReference>
<dbReference type="PROSITE" id="PS51349">
    <property type="entry name" value="FMN_HYDROXY_ACID_DH_2"/>
    <property type="match status" value="1"/>
</dbReference>
<evidence type="ECO:0000255" key="1">
    <source>
        <dbReference type="HAMAP-Rule" id="MF_01559"/>
    </source>
</evidence>
<gene>
    <name evidence="1" type="primary">lldD</name>
    <name type="ordered locus">ECUMN_4120</name>
</gene>
<proteinExistence type="inferred from homology"/>